<keyword id="KW-0067">ATP-binding</keyword>
<keyword id="KW-0997">Cell inner membrane</keyword>
<keyword id="KW-1003">Cell membrane</keyword>
<keyword id="KW-0472">Membrane</keyword>
<keyword id="KW-0547">Nucleotide-binding</keyword>
<keyword id="KW-1278">Translocase</keyword>
<keyword id="KW-0813">Transport</keyword>
<feature type="chain" id="PRO_0000272100" description="Lipoprotein-releasing system ATP-binding protein LolD">
    <location>
        <begin position="1"/>
        <end position="227"/>
    </location>
</feature>
<feature type="domain" description="ABC transporter" evidence="1">
    <location>
        <begin position="6"/>
        <end position="227"/>
    </location>
</feature>
<feature type="binding site" evidence="1">
    <location>
        <begin position="42"/>
        <end position="49"/>
    </location>
    <ligand>
        <name>ATP</name>
        <dbReference type="ChEBI" id="CHEBI:30616"/>
    </ligand>
</feature>
<comment type="function">
    <text evidence="1">Part of the ABC transporter complex LolCDE involved in the translocation of mature outer membrane-directed lipoproteins, from the inner membrane to the periplasmic chaperone, LolA. Responsible for the formation of the LolA-lipoprotein complex in an ATP-dependent manner.</text>
</comment>
<comment type="subunit">
    <text evidence="1">The complex is composed of two ATP-binding proteins (LolD) and two transmembrane proteins (LolC and LolE).</text>
</comment>
<comment type="subcellular location">
    <subcellularLocation>
        <location evidence="1">Cell inner membrane</location>
        <topology evidence="1">Peripheral membrane protein</topology>
    </subcellularLocation>
</comment>
<comment type="similarity">
    <text evidence="1">Belongs to the ABC transporter superfamily. Lipoprotein translocase (TC 3.A.1.125) family.</text>
</comment>
<organism>
    <name type="scientific">Legionella pneumophila (strain Paris)</name>
    <dbReference type="NCBI Taxonomy" id="297246"/>
    <lineage>
        <taxon>Bacteria</taxon>
        <taxon>Pseudomonadati</taxon>
        <taxon>Pseudomonadota</taxon>
        <taxon>Gammaproteobacteria</taxon>
        <taxon>Legionellales</taxon>
        <taxon>Legionellaceae</taxon>
        <taxon>Legionella</taxon>
    </lineage>
</organism>
<evidence type="ECO:0000255" key="1">
    <source>
        <dbReference type="HAMAP-Rule" id="MF_01708"/>
    </source>
</evidence>
<sequence length="227" mass="25187">MNDIILTSQKLYKSYHDGTSRVEVLKGVDLAITKGDRIAIIGPSGSGKSTLLHLLGGLDKPTSGLITLGKVDWQKINEKQRCQLRNQQLGFVYQFHHLLPEFTALENVMMPLLLAGMAVKDAEEKAINMLEQVGLKPRLAHKPAQLSGGERQRVAIARALVHQPHCVLADEPTGNLDEATASKVFDLMLELNKKMNTALVIVTHDQRIAERMDRVLVLHEGSLYARE</sequence>
<reference key="1">
    <citation type="journal article" date="2004" name="Nat. Genet.">
        <title>Evidence in the Legionella pneumophila genome for exploitation of host cell functions and high genome plasticity.</title>
        <authorList>
            <person name="Cazalet C."/>
            <person name="Rusniok C."/>
            <person name="Brueggemann H."/>
            <person name="Zidane N."/>
            <person name="Magnier A."/>
            <person name="Ma L."/>
            <person name="Tichit M."/>
            <person name="Jarraud S."/>
            <person name="Bouchier C."/>
            <person name="Vandenesch F."/>
            <person name="Kunst F."/>
            <person name="Etienne J."/>
            <person name="Glaser P."/>
            <person name="Buchrieser C."/>
        </authorList>
    </citation>
    <scope>NUCLEOTIDE SEQUENCE [LARGE SCALE GENOMIC DNA]</scope>
    <source>
        <strain>Paris</strain>
    </source>
</reference>
<proteinExistence type="inferred from homology"/>
<accession>Q5X2Z8</accession>
<gene>
    <name evidence="1" type="primary">lolD</name>
    <name type="ordered locus">lpp2238</name>
</gene>
<protein>
    <recommendedName>
        <fullName evidence="1">Lipoprotein-releasing system ATP-binding protein LolD</fullName>
        <ecNumber evidence="1">7.6.2.-</ecNumber>
    </recommendedName>
</protein>
<name>LOLD_LEGPA</name>
<dbReference type="EC" id="7.6.2.-" evidence="1"/>
<dbReference type="EMBL" id="CR628336">
    <property type="protein sequence ID" value="CAH13390.1"/>
    <property type="molecule type" value="Genomic_DNA"/>
</dbReference>
<dbReference type="RefSeq" id="WP_015961404.1">
    <property type="nucleotide sequence ID" value="NC_006368.1"/>
</dbReference>
<dbReference type="SMR" id="Q5X2Z8"/>
<dbReference type="KEGG" id="lpp:lpp2238"/>
<dbReference type="LegioList" id="lpp2238"/>
<dbReference type="HOGENOM" id="CLU_000604_1_22_6"/>
<dbReference type="GO" id="GO:0005886">
    <property type="term" value="C:plasma membrane"/>
    <property type="evidence" value="ECO:0007669"/>
    <property type="project" value="UniProtKB-SubCell"/>
</dbReference>
<dbReference type="GO" id="GO:0005524">
    <property type="term" value="F:ATP binding"/>
    <property type="evidence" value="ECO:0007669"/>
    <property type="project" value="UniProtKB-KW"/>
</dbReference>
<dbReference type="GO" id="GO:0016887">
    <property type="term" value="F:ATP hydrolysis activity"/>
    <property type="evidence" value="ECO:0007669"/>
    <property type="project" value="InterPro"/>
</dbReference>
<dbReference type="GO" id="GO:0022857">
    <property type="term" value="F:transmembrane transporter activity"/>
    <property type="evidence" value="ECO:0007669"/>
    <property type="project" value="TreeGrafter"/>
</dbReference>
<dbReference type="GO" id="GO:0044874">
    <property type="term" value="P:lipoprotein localization to outer membrane"/>
    <property type="evidence" value="ECO:0007669"/>
    <property type="project" value="TreeGrafter"/>
</dbReference>
<dbReference type="GO" id="GO:0089705">
    <property type="term" value="P:protein localization to outer membrane"/>
    <property type="evidence" value="ECO:0007669"/>
    <property type="project" value="TreeGrafter"/>
</dbReference>
<dbReference type="CDD" id="cd03255">
    <property type="entry name" value="ABC_MJ0796_LolCDE_FtsE"/>
    <property type="match status" value="1"/>
</dbReference>
<dbReference type="FunFam" id="3.40.50.300:FF:000230">
    <property type="entry name" value="Lipoprotein-releasing system ATP-binding protein LolD"/>
    <property type="match status" value="1"/>
</dbReference>
<dbReference type="Gene3D" id="3.40.50.300">
    <property type="entry name" value="P-loop containing nucleotide triphosphate hydrolases"/>
    <property type="match status" value="1"/>
</dbReference>
<dbReference type="InterPro" id="IPR003593">
    <property type="entry name" value="AAA+_ATPase"/>
</dbReference>
<dbReference type="InterPro" id="IPR003439">
    <property type="entry name" value="ABC_transporter-like_ATP-bd"/>
</dbReference>
<dbReference type="InterPro" id="IPR017871">
    <property type="entry name" value="ABC_transporter-like_CS"/>
</dbReference>
<dbReference type="InterPro" id="IPR015854">
    <property type="entry name" value="ABC_transpr_LolD-like"/>
</dbReference>
<dbReference type="InterPro" id="IPR011924">
    <property type="entry name" value="LolD_lipo_ATP-bd"/>
</dbReference>
<dbReference type="InterPro" id="IPR017911">
    <property type="entry name" value="MacB-like_ATP-bd"/>
</dbReference>
<dbReference type="InterPro" id="IPR027417">
    <property type="entry name" value="P-loop_NTPase"/>
</dbReference>
<dbReference type="NCBIfam" id="TIGR02211">
    <property type="entry name" value="LolD_lipo_ex"/>
    <property type="match status" value="1"/>
</dbReference>
<dbReference type="PANTHER" id="PTHR24220">
    <property type="entry name" value="IMPORT ATP-BINDING PROTEIN"/>
    <property type="match status" value="1"/>
</dbReference>
<dbReference type="PANTHER" id="PTHR24220:SF689">
    <property type="entry name" value="LIPOPROTEIN-RELEASING SYSTEM ATP-BINDING PROTEIN LOLD"/>
    <property type="match status" value="1"/>
</dbReference>
<dbReference type="Pfam" id="PF00005">
    <property type="entry name" value="ABC_tran"/>
    <property type="match status" value="1"/>
</dbReference>
<dbReference type="SMART" id="SM00382">
    <property type="entry name" value="AAA"/>
    <property type="match status" value="1"/>
</dbReference>
<dbReference type="SUPFAM" id="SSF52540">
    <property type="entry name" value="P-loop containing nucleoside triphosphate hydrolases"/>
    <property type="match status" value="1"/>
</dbReference>
<dbReference type="PROSITE" id="PS00211">
    <property type="entry name" value="ABC_TRANSPORTER_1"/>
    <property type="match status" value="1"/>
</dbReference>
<dbReference type="PROSITE" id="PS50893">
    <property type="entry name" value="ABC_TRANSPORTER_2"/>
    <property type="match status" value="1"/>
</dbReference>
<dbReference type="PROSITE" id="PS51244">
    <property type="entry name" value="LOLD"/>
    <property type="match status" value="1"/>
</dbReference>